<comment type="function">
    <text evidence="2 6 7">Rho subunit of the pentameric ligand-gated chloride channels responsible for mediating the effects of gamma-aminobutyric acid (GABA), the major inhibitory neurotransmitter in the brain (PubMed:37659407). Rho-containing GABA-gated chloride channels are a subclass of GABA(A) receptors (GABAARs) entirely composed of rho subunits, where GABA molecules bind at the rho intersubunit interfaces (PubMed:37659407). When activated by GABA, rho-GABAARs selectively allow the flow of chloride anions across the cell membrane down their electrochemical gradient (PubMed:37659407). Rho-1 subunits are primarily expressed in retina where rho-1-containing GABAARs may play a role in retinal neurotransmission (PubMed:1849271). Rho-1 GABAARs are also involved in neuronal tonic (extrasynaptic) and phasic (synaptic) transmission in the Purkinje neurons of the cerebellum (By similarity). Rho-1 GABAARs may also contribute to the regulation of glial development in the cerebellum by controlling extrasynaptic transmission (By similarity).</text>
</comment>
<comment type="catalytic activity">
    <reaction evidence="7">
        <text>chloride(in) = chloride(out)</text>
        <dbReference type="Rhea" id="RHEA:29823"/>
        <dbReference type="ChEBI" id="CHEBI:17996"/>
    </reaction>
</comment>
<comment type="activity regulation">
    <text evidence="7">Inhibited by TPMPA, a rho-specific antagonist, when forming a homopentamer (PubMed:37659407). In contrast with other GABAARs, rho-1 GABAAR is not inhibited by bicuculline, when forming a homopentamer (PubMed:37659407).</text>
</comment>
<comment type="subunit">
    <text evidence="1 2 7">Three rho subunits (rho-1/GBRR1, rho-2/GBRR2 and rho-3/GBRR3) coassemble either to form functional homopentamers or heteropentamers (PubMed:37659407). Rho-1/GBRR1 subunits can also associate with alpha-1/GBRA1 subunits to form a functional GABAAR (By similarity). Interacts with SQSTM1 (By similarity).</text>
</comment>
<comment type="subcellular location">
    <subcellularLocation>
        <location evidence="2">Postsynaptic cell membrane</location>
        <topology evidence="7">Multi-pass membrane protein</topology>
    </subcellularLocation>
    <subcellularLocation>
        <location evidence="7">Cell membrane</location>
        <topology evidence="7">Multi-pass membrane protein</topology>
    </subcellularLocation>
</comment>
<comment type="alternative products">
    <event type="alternative splicing"/>
    <isoform>
        <id>P24046-1</id>
        <name>1</name>
        <sequence type="displayed"/>
    </isoform>
    <isoform>
        <id>P24046-2</id>
        <name>2</name>
        <sequence type="described" ref="VSP_036363"/>
    </isoform>
    <isoform>
        <id>P24046-3</id>
        <name>3</name>
        <sequence type="described" ref="VSP_046665"/>
    </isoform>
</comment>
<comment type="tissue specificity">
    <text evidence="6">Highly expressed in the retina (PubMed:1849271). Expressed in a lesser extent in brain, lung and thymus (PubMed:1849271).</text>
</comment>
<comment type="domain">
    <text evidence="7">GABAARs subunits share a common topological structure: a peptide sequence made up of a long extracellular N-terminal, four transmembrane domains, intracellular or cytoplasmic domain located between the third and the fourth transmembrane domains.</text>
</comment>
<comment type="similarity">
    <text evidence="11">Belongs to the ligand-gated ion channel (TC 1.A.9) family. Gamma-aminobutyric acid receptor (TC 1.A.9.5) subfamily. GABRR1 sub-subfamily.</text>
</comment>
<comment type="sequence caution" evidence="11">
    <conflict type="erroneous initiation">
        <sequence resource="EMBL-CDS" id="AAA52509"/>
    </conflict>
</comment>
<comment type="sequence caution" evidence="11">
    <conflict type="erroneous initiation">
        <sequence resource="EMBL-CDS" id="AAI30345"/>
    </conflict>
</comment>
<sequence>MLAVPNMRFGIFLLWWGWVLATESRMHWPGREVHEMSKKGRPQRQRREVHEDAHKQVSPILRRSPDITKSPLTKSEQLLRIDDHDFSMRPGFGGPAIPVGVDVQVESLDSISEVDMDFTMTLYLRHYWKDERLSFPSTNNLSMTFDGRLVKKIWVPDMFFVHSKRSFIHDTTTDNVMLRVQPDGKVLYSLRVTVTAMCNMDFSRFPLDTQTCSLEIESYAYTEDDLMLYWKKGNDSLKTDERISLSQFLIQEFHTTTKLAFYSSTGWYNRLYINFTLRRHIFFFLLQTYFPATLMVMLSWVSFWIDRRAVPARVPLGITTVLTMSTIITGVNASMPRVSYIKAVDIYLWVSFVFVFLSVLEYAAVNYLTTVQERKEQKLREKLPCTSGLPPPRTAMLDGNYSDGEVNDLDNYMPENGEKPDRMMVQLTLASERSSPQRKSQRSSYVSMRIDTHAIDKYSRIIFPAAYILFNLIYWSIFS</sequence>
<accession>P24046</accession>
<accession>A1L401</accession>
<accession>B4DJK8</accession>
<accession>B4DQT5</accession>
<accession>B7ZBQ7</accession>
<accession>Q9BX06</accession>
<feature type="signal peptide" evidence="3">
    <location>
        <begin position="1"/>
        <end position="21"/>
    </location>
</feature>
<feature type="chain" id="PRO_0000000485" description="Gamma-aminobutyric acid receptor subunit rho-1">
    <location>
        <begin position="22"/>
        <end position="479"/>
    </location>
</feature>
<feature type="topological domain" description="Extracellular" evidence="11">
    <location>
        <begin position="22"/>
        <end position="280"/>
    </location>
</feature>
<feature type="transmembrane region" description="Helical" evidence="3">
    <location>
        <begin position="281"/>
        <end position="301"/>
    </location>
</feature>
<feature type="topological domain" description="Cytoplasmic" evidence="11">
    <location>
        <begin position="302"/>
        <end position="313"/>
    </location>
</feature>
<feature type="transmembrane region" description="Helical" evidence="3">
    <location>
        <begin position="314"/>
        <end position="334"/>
    </location>
</feature>
<feature type="topological domain" description="Extracellular" evidence="11">
    <location>
        <begin position="335"/>
        <end position="345"/>
    </location>
</feature>
<feature type="transmembrane region" description="Helical" evidence="3">
    <location>
        <begin position="346"/>
        <end position="366"/>
    </location>
</feature>
<feature type="topological domain" description="Cytoplasmic" evidence="11">
    <location>
        <begin position="367"/>
        <end position="457"/>
    </location>
</feature>
<feature type="transmembrane region" description="Helical" evidence="3">
    <location>
        <begin position="458"/>
        <end position="478"/>
    </location>
</feature>
<feature type="topological domain" description="Extracellular" evidence="11">
    <location>
        <position position="479"/>
    </location>
</feature>
<feature type="region of interest" description="Disordered" evidence="4">
    <location>
        <begin position="32"/>
        <end position="55"/>
    </location>
</feature>
<feature type="compositionally biased region" description="Basic and acidic residues" evidence="4">
    <location>
        <begin position="45"/>
        <end position="55"/>
    </location>
</feature>
<feature type="binding site" description="in chain A" evidence="7 13">
    <location>
        <position position="125"/>
    </location>
    <ligand>
        <name>4-aminobutanoate</name>
        <dbReference type="ChEBI" id="CHEBI:59888"/>
        <note>ligand shared between two neighboring rho subunits</note>
    </ligand>
</feature>
<feature type="binding site" description="in chain A" evidence="7 13">
    <location>
        <position position="189"/>
    </location>
    <ligand>
        <name>4-aminobutanoate</name>
        <dbReference type="ChEBI" id="CHEBI:59888"/>
        <note>ligand shared between two neighboring rho subunits</note>
    </ligand>
</feature>
<feature type="binding site" description="in chain B" evidence="7 13">
    <location>
        <position position="217"/>
    </location>
    <ligand>
        <name>4-aminobutanoate</name>
        <dbReference type="ChEBI" id="CHEBI:59888"/>
        <note>ligand shared between two neighboring rho subunits</note>
    </ligand>
</feature>
<feature type="glycosylation site" description="N-linked (GlcNAc...) asparagine" evidence="7 13">
    <location>
        <position position="140"/>
    </location>
</feature>
<feature type="glycosylation site" description="N-linked (GlcNAc...) asparagine" evidence="7 13">
    <location>
        <position position="234"/>
    </location>
</feature>
<feature type="glycosylation site" description="N-linked (GlcNAc...) asparagine" evidence="3">
    <location>
        <position position="274"/>
    </location>
</feature>
<feature type="disulfide bond" evidence="7 13">
    <location>
        <begin position="198"/>
        <end position="212"/>
    </location>
</feature>
<feature type="splice variant" id="VSP_046665" description="In isoform 3." evidence="8">
    <location>
        <begin position="1"/>
        <end position="87"/>
    </location>
</feature>
<feature type="splice variant" id="VSP_036363" description="In isoform 2." evidence="8">
    <location>
        <begin position="41"/>
        <end position="57"/>
    </location>
</feature>
<feature type="sequence variant" id="VAR_054426" description="In dbSNP:rs12200969." evidence="5">
    <original>M</original>
    <variation>V</variation>
    <location>
        <position position="26"/>
    </location>
</feature>
<feature type="sequence variant" id="VAR_024361" description="In dbSNP:rs1186902.">
    <original>H</original>
    <variation>R</variation>
    <location>
        <position position="27"/>
    </location>
</feature>
<feature type="sequence conflict" description="In Ref. 4; AAI30345." evidence="11" ref="4">
    <original>G</original>
    <variation>GS</variation>
    <location>
        <position position="40"/>
    </location>
</feature>
<feature type="sequence conflict" description="In Ref. 2; BAG61047." evidence="11" ref="2">
    <original>MV</original>
    <variation>VM</variation>
    <location>
        <begin position="424"/>
        <end position="425"/>
    </location>
</feature>
<feature type="helix" evidence="18">
    <location>
        <begin position="75"/>
        <end position="77"/>
    </location>
</feature>
<feature type="turn" evidence="18">
    <location>
        <begin position="78"/>
        <end position="80"/>
    </location>
</feature>
<feature type="helix" evidence="18">
    <location>
        <begin position="81"/>
        <end position="83"/>
    </location>
</feature>
<feature type="turn" evidence="18">
    <location>
        <begin position="90"/>
        <end position="93"/>
    </location>
</feature>
<feature type="strand" evidence="18">
    <location>
        <begin position="97"/>
        <end position="112"/>
    </location>
</feature>
<feature type="turn" evidence="18">
    <location>
        <begin position="113"/>
        <end position="116"/>
    </location>
</feature>
<feature type="strand" evidence="18">
    <location>
        <begin position="117"/>
        <end position="129"/>
    </location>
</feature>
<feature type="helix" evidence="18">
    <location>
        <begin position="131"/>
        <end position="133"/>
    </location>
</feature>
<feature type="strand" evidence="18">
    <location>
        <begin position="143"/>
        <end position="145"/>
    </location>
</feature>
<feature type="helix" evidence="18">
    <location>
        <begin position="147"/>
        <end position="152"/>
    </location>
</feature>
<feature type="strand" evidence="18">
    <location>
        <begin position="158"/>
        <end position="161"/>
    </location>
</feature>
<feature type="strand" evidence="18">
    <location>
        <begin position="163"/>
        <end position="168"/>
    </location>
</feature>
<feature type="strand" evidence="18">
    <location>
        <begin position="171"/>
        <end position="173"/>
    </location>
</feature>
<feature type="strand" evidence="18">
    <location>
        <begin position="176"/>
        <end position="180"/>
    </location>
</feature>
<feature type="strand" evidence="18">
    <location>
        <begin position="184"/>
        <end position="197"/>
    </location>
</feature>
<feature type="turn" evidence="18">
    <location>
        <begin position="203"/>
        <end position="206"/>
    </location>
</feature>
<feature type="strand" evidence="18">
    <location>
        <begin position="210"/>
        <end position="220"/>
    </location>
</feature>
<feature type="turn" evidence="18">
    <location>
        <begin position="223"/>
        <end position="225"/>
    </location>
</feature>
<feature type="strand" evidence="18">
    <location>
        <begin position="226"/>
        <end position="230"/>
    </location>
</feature>
<feature type="helix" evidence="18">
    <location>
        <begin position="233"/>
        <end position="236"/>
    </location>
</feature>
<feature type="strand" evidence="18">
    <location>
        <begin position="237"/>
        <end position="239"/>
    </location>
</feature>
<feature type="strand" evidence="18">
    <location>
        <begin position="249"/>
        <end position="262"/>
    </location>
</feature>
<feature type="turn" evidence="18">
    <location>
        <begin position="263"/>
        <end position="265"/>
    </location>
</feature>
<feature type="strand" evidence="18">
    <location>
        <begin position="266"/>
        <end position="278"/>
    </location>
</feature>
<feature type="helix" evidence="18">
    <location>
        <begin position="281"/>
        <end position="299"/>
    </location>
</feature>
<feature type="helix" evidence="18">
    <location>
        <begin position="300"/>
        <end position="304"/>
    </location>
</feature>
<feature type="helix" evidence="18">
    <location>
        <begin position="310"/>
        <end position="334"/>
    </location>
</feature>
<feature type="helix" evidence="18">
    <location>
        <begin position="343"/>
        <end position="379"/>
    </location>
</feature>
<feature type="helix" evidence="18">
    <location>
        <begin position="454"/>
        <end position="477"/>
    </location>
</feature>
<gene>
    <name evidence="12" type="primary">GABRR1</name>
</gene>
<protein>
    <recommendedName>
        <fullName evidence="9">Gamma-aminobutyric acid receptor subunit rho-1</fullName>
    </recommendedName>
    <alternativeName>
        <fullName>GABA(A) receptor subunit rho-1</fullName>
        <shortName evidence="10">GABAAR subunit rho-1</shortName>
    </alternativeName>
    <alternativeName>
        <fullName evidence="1">GABA(C) receptor</fullName>
    </alternativeName>
</protein>
<proteinExistence type="evidence at protein level"/>
<keyword id="KW-0002">3D-structure</keyword>
<keyword id="KW-0025">Alternative splicing</keyword>
<keyword id="KW-1003">Cell membrane</keyword>
<keyword id="KW-0868">Chloride</keyword>
<keyword id="KW-0869">Chloride channel</keyword>
<keyword id="KW-1015">Disulfide bond</keyword>
<keyword id="KW-0325">Glycoprotein</keyword>
<keyword id="KW-0407">Ion channel</keyword>
<keyword id="KW-0406">Ion transport</keyword>
<keyword id="KW-0472">Membrane</keyword>
<keyword id="KW-0628">Postsynaptic cell membrane</keyword>
<keyword id="KW-1185">Reference proteome</keyword>
<keyword id="KW-0732">Signal</keyword>
<keyword id="KW-0770">Synapse</keyword>
<keyword id="KW-0812">Transmembrane</keyword>
<keyword id="KW-1133">Transmembrane helix</keyword>
<keyword id="KW-0813">Transport</keyword>
<reference key="1">
    <citation type="journal article" date="1991" name="Proc. Natl. Acad. Sci. U.S.A.">
        <title>Cloning of the gamma-aminobutyric acid (GABA) rho 1 cDNA: a GABA receptor subunit highly expressed in the retina.</title>
        <authorList>
            <person name="Cutting G.R."/>
            <person name="Lu L."/>
            <person name="O'Hara B.F."/>
            <person name="Kasch L.M."/>
            <person name="Montrose-Rafizadeh C."/>
            <person name="Donovan D.M."/>
            <person name="Shimada S."/>
            <person name="Antonarakis S.E."/>
            <person name="Guggino W.B."/>
            <person name="Uhl G.R."/>
            <person name="Kazazian H.H. Jr."/>
        </authorList>
    </citation>
    <scope>NUCLEOTIDE SEQUENCE [MRNA] (ISOFORM 1)</scope>
    <scope>FUNCTION</scope>
    <scope>TISSUE SPECIFICITY</scope>
    <source>
        <tissue>Retina</tissue>
    </source>
</reference>
<reference key="2">
    <citation type="journal article" date="2004" name="Nat. Genet.">
        <title>Complete sequencing and characterization of 21,243 full-length human cDNAs.</title>
        <authorList>
            <person name="Ota T."/>
            <person name="Suzuki Y."/>
            <person name="Nishikawa T."/>
            <person name="Otsuki T."/>
            <person name="Sugiyama T."/>
            <person name="Irie R."/>
            <person name="Wakamatsu A."/>
            <person name="Hayashi K."/>
            <person name="Sato H."/>
            <person name="Nagai K."/>
            <person name="Kimura K."/>
            <person name="Makita H."/>
            <person name="Sekine M."/>
            <person name="Obayashi M."/>
            <person name="Nishi T."/>
            <person name="Shibahara T."/>
            <person name="Tanaka T."/>
            <person name="Ishii S."/>
            <person name="Yamamoto J."/>
            <person name="Saito K."/>
            <person name="Kawai Y."/>
            <person name="Isono Y."/>
            <person name="Nakamura Y."/>
            <person name="Nagahari K."/>
            <person name="Murakami K."/>
            <person name="Yasuda T."/>
            <person name="Iwayanagi T."/>
            <person name="Wagatsuma M."/>
            <person name="Shiratori A."/>
            <person name="Sudo H."/>
            <person name="Hosoiri T."/>
            <person name="Kaku Y."/>
            <person name="Kodaira H."/>
            <person name="Kondo H."/>
            <person name="Sugawara M."/>
            <person name="Takahashi M."/>
            <person name="Kanda K."/>
            <person name="Yokoi T."/>
            <person name="Furuya T."/>
            <person name="Kikkawa E."/>
            <person name="Omura Y."/>
            <person name="Abe K."/>
            <person name="Kamihara K."/>
            <person name="Katsuta N."/>
            <person name="Sato K."/>
            <person name="Tanikawa M."/>
            <person name="Yamazaki M."/>
            <person name="Ninomiya K."/>
            <person name="Ishibashi T."/>
            <person name="Yamashita H."/>
            <person name="Murakawa K."/>
            <person name="Fujimori K."/>
            <person name="Tanai H."/>
            <person name="Kimata M."/>
            <person name="Watanabe M."/>
            <person name="Hiraoka S."/>
            <person name="Chiba Y."/>
            <person name="Ishida S."/>
            <person name="Ono Y."/>
            <person name="Takiguchi S."/>
            <person name="Watanabe S."/>
            <person name="Yosida M."/>
            <person name="Hotuta T."/>
            <person name="Kusano J."/>
            <person name="Kanehori K."/>
            <person name="Takahashi-Fujii A."/>
            <person name="Hara H."/>
            <person name="Tanase T.-O."/>
            <person name="Nomura Y."/>
            <person name="Togiya S."/>
            <person name="Komai F."/>
            <person name="Hara R."/>
            <person name="Takeuchi K."/>
            <person name="Arita M."/>
            <person name="Imose N."/>
            <person name="Musashino K."/>
            <person name="Yuuki H."/>
            <person name="Oshima A."/>
            <person name="Sasaki N."/>
            <person name="Aotsuka S."/>
            <person name="Yoshikawa Y."/>
            <person name="Matsunawa H."/>
            <person name="Ichihara T."/>
            <person name="Shiohata N."/>
            <person name="Sano S."/>
            <person name="Moriya S."/>
            <person name="Momiyama H."/>
            <person name="Satoh N."/>
            <person name="Takami S."/>
            <person name="Terashima Y."/>
            <person name="Suzuki O."/>
            <person name="Nakagawa S."/>
            <person name="Senoh A."/>
            <person name="Mizoguchi H."/>
            <person name="Goto Y."/>
            <person name="Shimizu F."/>
            <person name="Wakebe H."/>
            <person name="Hishigaki H."/>
            <person name="Watanabe T."/>
            <person name="Sugiyama A."/>
            <person name="Takemoto M."/>
            <person name="Kawakami B."/>
            <person name="Yamazaki M."/>
            <person name="Watanabe K."/>
            <person name="Kumagai A."/>
            <person name="Itakura S."/>
            <person name="Fukuzumi Y."/>
            <person name="Fujimori Y."/>
            <person name="Komiyama M."/>
            <person name="Tashiro H."/>
            <person name="Tanigami A."/>
            <person name="Fujiwara T."/>
            <person name="Ono T."/>
            <person name="Yamada K."/>
            <person name="Fujii Y."/>
            <person name="Ozaki K."/>
            <person name="Hirao M."/>
            <person name="Ohmori Y."/>
            <person name="Kawabata A."/>
            <person name="Hikiji T."/>
            <person name="Kobatake N."/>
            <person name="Inagaki H."/>
            <person name="Ikema Y."/>
            <person name="Okamoto S."/>
            <person name="Okitani R."/>
            <person name="Kawakami T."/>
            <person name="Noguchi S."/>
            <person name="Itoh T."/>
            <person name="Shigeta K."/>
            <person name="Senba T."/>
            <person name="Matsumura K."/>
            <person name="Nakajima Y."/>
            <person name="Mizuno T."/>
            <person name="Morinaga M."/>
            <person name="Sasaki M."/>
            <person name="Togashi T."/>
            <person name="Oyama M."/>
            <person name="Hata H."/>
            <person name="Watanabe M."/>
            <person name="Komatsu T."/>
            <person name="Mizushima-Sugano J."/>
            <person name="Satoh T."/>
            <person name="Shirai Y."/>
            <person name="Takahashi Y."/>
            <person name="Nakagawa K."/>
            <person name="Okumura K."/>
            <person name="Nagase T."/>
            <person name="Nomura N."/>
            <person name="Kikuchi H."/>
            <person name="Masuho Y."/>
            <person name="Yamashita R."/>
            <person name="Nakai K."/>
            <person name="Yada T."/>
            <person name="Nakamura Y."/>
            <person name="Ohara O."/>
            <person name="Isogai T."/>
            <person name="Sugano S."/>
        </authorList>
    </citation>
    <scope>NUCLEOTIDE SEQUENCE [LARGE SCALE MRNA] (ISOFORMS 2 AND 3)</scope>
    <scope>VARIANT VAL-26</scope>
    <source>
        <tissue>Thalamus</tissue>
    </source>
</reference>
<reference key="3">
    <citation type="journal article" date="2003" name="Nature">
        <title>The DNA sequence and analysis of human chromosome 6.</title>
        <authorList>
            <person name="Mungall A.J."/>
            <person name="Palmer S.A."/>
            <person name="Sims S.K."/>
            <person name="Edwards C.A."/>
            <person name="Ashurst J.L."/>
            <person name="Wilming L."/>
            <person name="Jones M.C."/>
            <person name="Horton R."/>
            <person name="Hunt S.E."/>
            <person name="Scott C.E."/>
            <person name="Gilbert J.G.R."/>
            <person name="Clamp M.E."/>
            <person name="Bethel G."/>
            <person name="Milne S."/>
            <person name="Ainscough R."/>
            <person name="Almeida J.P."/>
            <person name="Ambrose K.D."/>
            <person name="Andrews T.D."/>
            <person name="Ashwell R.I.S."/>
            <person name="Babbage A.K."/>
            <person name="Bagguley C.L."/>
            <person name="Bailey J."/>
            <person name="Banerjee R."/>
            <person name="Barker D.J."/>
            <person name="Barlow K.F."/>
            <person name="Bates K."/>
            <person name="Beare D.M."/>
            <person name="Beasley H."/>
            <person name="Beasley O."/>
            <person name="Bird C.P."/>
            <person name="Blakey S.E."/>
            <person name="Bray-Allen S."/>
            <person name="Brook J."/>
            <person name="Brown A.J."/>
            <person name="Brown J.Y."/>
            <person name="Burford D.C."/>
            <person name="Burrill W."/>
            <person name="Burton J."/>
            <person name="Carder C."/>
            <person name="Carter N.P."/>
            <person name="Chapman J.C."/>
            <person name="Clark S.Y."/>
            <person name="Clark G."/>
            <person name="Clee C.M."/>
            <person name="Clegg S."/>
            <person name="Cobley V."/>
            <person name="Collier R.E."/>
            <person name="Collins J.E."/>
            <person name="Colman L.K."/>
            <person name="Corby N.R."/>
            <person name="Coville G.J."/>
            <person name="Culley K.M."/>
            <person name="Dhami P."/>
            <person name="Davies J."/>
            <person name="Dunn M."/>
            <person name="Earthrowl M.E."/>
            <person name="Ellington A.E."/>
            <person name="Evans K.A."/>
            <person name="Faulkner L."/>
            <person name="Francis M.D."/>
            <person name="Frankish A."/>
            <person name="Frankland J."/>
            <person name="French L."/>
            <person name="Garner P."/>
            <person name="Garnett J."/>
            <person name="Ghori M.J."/>
            <person name="Gilby L.M."/>
            <person name="Gillson C.J."/>
            <person name="Glithero R.J."/>
            <person name="Grafham D.V."/>
            <person name="Grant M."/>
            <person name="Gribble S."/>
            <person name="Griffiths C."/>
            <person name="Griffiths M.N.D."/>
            <person name="Hall R."/>
            <person name="Halls K.S."/>
            <person name="Hammond S."/>
            <person name="Harley J.L."/>
            <person name="Hart E.A."/>
            <person name="Heath P.D."/>
            <person name="Heathcott R."/>
            <person name="Holmes S.J."/>
            <person name="Howden P.J."/>
            <person name="Howe K.L."/>
            <person name="Howell G.R."/>
            <person name="Huckle E."/>
            <person name="Humphray S.J."/>
            <person name="Humphries M.D."/>
            <person name="Hunt A.R."/>
            <person name="Johnson C.M."/>
            <person name="Joy A.A."/>
            <person name="Kay M."/>
            <person name="Keenan S.J."/>
            <person name="Kimberley A.M."/>
            <person name="King A."/>
            <person name="Laird G.K."/>
            <person name="Langford C."/>
            <person name="Lawlor S."/>
            <person name="Leongamornlert D.A."/>
            <person name="Leversha M."/>
            <person name="Lloyd C.R."/>
            <person name="Lloyd D.M."/>
            <person name="Loveland J.E."/>
            <person name="Lovell J."/>
            <person name="Martin S."/>
            <person name="Mashreghi-Mohammadi M."/>
            <person name="Maslen G.L."/>
            <person name="Matthews L."/>
            <person name="McCann O.T."/>
            <person name="McLaren S.J."/>
            <person name="McLay K."/>
            <person name="McMurray A."/>
            <person name="Moore M.J.F."/>
            <person name="Mullikin J.C."/>
            <person name="Niblett D."/>
            <person name="Nickerson T."/>
            <person name="Novik K.L."/>
            <person name="Oliver K."/>
            <person name="Overton-Larty E.K."/>
            <person name="Parker A."/>
            <person name="Patel R."/>
            <person name="Pearce A.V."/>
            <person name="Peck A.I."/>
            <person name="Phillimore B.J.C.T."/>
            <person name="Phillips S."/>
            <person name="Plumb R.W."/>
            <person name="Porter K.M."/>
            <person name="Ramsey Y."/>
            <person name="Ranby S.A."/>
            <person name="Rice C.M."/>
            <person name="Ross M.T."/>
            <person name="Searle S.M."/>
            <person name="Sehra H.K."/>
            <person name="Sheridan E."/>
            <person name="Skuce C.D."/>
            <person name="Smith S."/>
            <person name="Smith M."/>
            <person name="Spraggon L."/>
            <person name="Squares S.L."/>
            <person name="Steward C.A."/>
            <person name="Sycamore N."/>
            <person name="Tamlyn-Hall G."/>
            <person name="Tester J."/>
            <person name="Theaker A.J."/>
            <person name="Thomas D.W."/>
            <person name="Thorpe A."/>
            <person name="Tracey A."/>
            <person name="Tromans A."/>
            <person name="Tubby B."/>
            <person name="Wall M."/>
            <person name="Wallis J.M."/>
            <person name="West A.P."/>
            <person name="White S.S."/>
            <person name="Whitehead S.L."/>
            <person name="Whittaker H."/>
            <person name="Wild A."/>
            <person name="Willey D.J."/>
            <person name="Wilmer T.E."/>
            <person name="Wood J.M."/>
            <person name="Wray P.W."/>
            <person name="Wyatt J.C."/>
            <person name="Young L."/>
            <person name="Younger R.M."/>
            <person name="Bentley D.R."/>
            <person name="Coulson A."/>
            <person name="Durbin R.M."/>
            <person name="Hubbard T."/>
            <person name="Sulston J.E."/>
            <person name="Dunham I."/>
            <person name="Rogers J."/>
            <person name="Beck S."/>
        </authorList>
    </citation>
    <scope>NUCLEOTIDE SEQUENCE [LARGE SCALE GENOMIC DNA]</scope>
</reference>
<reference key="4">
    <citation type="journal article" date="2004" name="Genome Res.">
        <title>The status, quality, and expansion of the NIH full-length cDNA project: the Mammalian Gene Collection (MGC).</title>
        <authorList>
            <consortium name="The MGC Project Team"/>
        </authorList>
    </citation>
    <scope>NUCLEOTIDE SEQUENCE [LARGE SCALE MRNA] (ISOFORM 1)</scope>
    <source>
        <tissue>Brain</tissue>
    </source>
</reference>
<reference evidence="13 14 15 16 17" key="5">
    <citation type="journal article" date="2023" name="Neuron">
        <title>Structure and dynamics of differential ligand binding in the human -type GABAA receptor.</title>
        <authorList>
            <person name="Cowgill J."/>
            <person name="Fan C."/>
            <person name="Haloi N."/>
            <person name="Tobiasson V."/>
            <person name="Zhuang Y."/>
            <person name="Howard R.J."/>
            <person name="Lindahl E."/>
        </authorList>
    </citation>
    <scope>STRUCTURE BY ELECTRON MICROSCOPY (2.20 ANGSTROMS) IN COMPLEX WITH GABA</scope>
    <scope>FUNCTION</scope>
    <scope>TRANSPORTER ACTIVITY</scope>
    <scope>ACTIVITY REGULATION</scope>
    <scope>SUBCELLULAR LOCATION</scope>
    <scope>HOMOPENTAMER</scope>
    <scope>DOMAIN</scope>
    <scope>DISULFIDE BOND</scope>
    <scope>GLYCOSYLATION AT ASN-140 AND ASN-234</scope>
</reference>
<evidence type="ECO:0000250" key="1">
    <source>
        <dbReference type="UniProtKB" id="P50572"/>
    </source>
</evidence>
<evidence type="ECO:0000250" key="2">
    <source>
        <dbReference type="UniProtKB" id="P56475"/>
    </source>
</evidence>
<evidence type="ECO:0000255" key="3"/>
<evidence type="ECO:0000256" key="4">
    <source>
        <dbReference type="SAM" id="MobiDB-lite"/>
    </source>
</evidence>
<evidence type="ECO:0000269" key="5">
    <source>
    </source>
</evidence>
<evidence type="ECO:0000269" key="6">
    <source>
    </source>
</evidence>
<evidence type="ECO:0000269" key="7">
    <source>
    </source>
</evidence>
<evidence type="ECO:0000303" key="8">
    <source>
    </source>
</evidence>
<evidence type="ECO:0000303" key="9">
    <source>
    </source>
</evidence>
<evidence type="ECO:0000303" key="10">
    <source>
    </source>
</evidence>
<evidence type="ECO:0000305" key="11"/>
<evidence type="ECO:0000312" key="12">
    <source>
        <dbReference type="HGNC" id="HGNC:4090"/>
    </source>
</evidence>
<evidence type="ECO:0007744" key="13">
    <source>
        <dbReference type="PDB" id="8OP9"/>
    </source>
</evidence>
<evidence type="ECO:0007744" key="14">
    <source>
        <dbReference type="PDB" id="8OQ6"/>
    </source>
</evidence>
<evidence type="ECO:0007744" key="15">
    <source>
        <dbReference type="PDB" id="8OQ7"/>
    </source>
</evidence>
<evidence type="ECO:0007744" key="16">
    <source>
        <dbReference type="PDB" id="8OQ8"/>
    </source>
</evidence>
<evidence type="ECO:0007744" key="17">
    <source>
        <dbReference type="PDB" id="8OQA"/>
    </source>
</evidence>
<evidence type="ECO:0007829" key="18">
    <source>
        <dbReference type="PDB" id="8OQ7"/>
    </source>
</evidence>
<dbReference type="EMBL" id="M62400">
    <property type="protein sequence ID" value="AAA52509.1"/>
    <property type="status" value="ALT_INIT"/>
    <property type="molecule type" value="mRNA"/>
</dbReference>
<dbReference type="EMBL" id="AK296124">
    <property type="protein sequence ID" value="BAG58870.1"/>
    <property type="molecule type" value="mRNA"/>
</dbReference>
<dbReference type="EMBL" id="AK298948">
    <property type="protein sequence ID" value="BAG61047.1"/>
    <property type="molecule type" value="mRNA"/>
</dbReference>
<dbReference type="EMBL" id="AL353659">
    <property type="status" value="NOT_ANNOTATED_CDS"/>
    <property type="molecule type" value="Genomic_DNA"/>
</dbReference>
<dbReference type="EMBL" id="AL353135">
    <property type="status" value="NOT_ANNOTATED_CDS"/>
    <property type="molecule type" value="Genomic_DNA"/>
</dbReference>
<dbReference type="EMBL" id="BC130344">
    <property type="protein sequence ID" value="AAI30345.1"/>
    <property type="status" value="ALT_INIT"/>
    <property type="molecule type" value="mRNA"/>
</dbReference>
<dbReference type="CCDS" id="CCDS5019.2">
    <molecule id="P24046-1"/>
</dbReference>
<dbReference type="CCDS" id="CCDS59028.1">
    <molecule id="P24046-3"/>
</dbReference>
<dbReference type="CCDS" id="CCDS59029.1">
    <molecule id="P24046-2"/>
</dbReference>
<dbReference type="PIR" id="A38627">
    <property type="entry name" value="A38627"/>
</dbReference>
<dbReference type="RefSeq" id="NP_001243632.1">
    <molecule id="P24046-2"/>
    <property type="nucleotide sequence ID" value="NM_001256703.1"/>
</dbReference>
<dbReference type="RefSeq" id="NP_001243633.1">
    <molecule id="P24046-3"/>
    <property type="nucleotide sequence ID" value="NM_001256704.1"/>
</dbReference>
<dbReference type="RefSeq" id="NP_001254511.1">
    <molecule id="P24046-3"/>
    <property type="nucleotide sequence ID" value="NM_001267582.2"/>
</dbReference>
<dbReference type="RefSeq" id="NP_002033.2">
    <molecule id="P24046-1"/>
    <property type="nucleotide sequence ID" value="NM_002042.5"/>
</dbReference>
<dbReference type="RefSeq" id="XP_016866178.1">
    <molecule id="P24046-3"/>
    <property type="nucleotide sequence ID" value="XM_017010689.2"/>
</dbReference>
<dbReference type="RefSeq" id="XP_054211049.1">
    <molecule id="P24046-3"/>
    <property type="nucleotide sequence ID" value="XM_054355074.1"/>
</dbReference>
<dbReference type="PDB" id="8OP9">
    <property type="method" value="EM"/>
    <property type="resolution" value="3.36 A"/>
    <property type="chains" value="A/B/C/D/E=1-479"/>
</dbReference>
<dbReference type="PDB" id="8OQ6">
    <property type="method" value="EM"/>
    <property type="resolution" value="3.21 A"/>
    <property type="chains" value="A/B/C/D/E=1-479"/>
</dbReference>
<dbReference type="PDB" id="8OQ7">
    <property type="method" value="EM"/>
    <property type="resolution" value="2.20 A"/>
    <property type="chains" value="A/B/C/D/E=1-479"/>
</dbReference>
<dbReference type="PDB" id="8OQ8">
    <property type="method" value="EM"/>
    <property type="resolution" value="2.90 A"/>
    <property type="chains" value="A/B/C/D/E=1-479"/>
</dbReference>
<dbReference type="PDB" id="8OQA">
    <property type="method" value="EM"/>
    <property type="resolution" value="2.90 A"/>
    <property type="chains" value="A/B/C/D/E=1-479"/>
</dbReference>
<dbReference type="PDB" id="8RH4">
    <property type="method" value="EM"/>
    <property type="resolution" value="2.52 A"/>
    <property type="chains" value="A/B/C/D/E=1-479"/>
</dbReference>
<dbReference type="PDB" id="8RH7">
    <property type="method" value="EM"/>
    <property type="resolution" value="2.78 A"/>
    <property type="chains" value="A/B/C/D/E=1-479"/>
</dbReference>
<dbReference type="PDB" id="8RH8">
    <property type="method" value="EM"/>
    <property type="resolution" value="2.66 A"/>
    <property type="chains" value="A/B/C/D/E=1-479"/>
</dbReference>
<dbReference type="PDB" id="8RH9">
    <property type="method" value="EM"/>
    <property type="resolution" value="3.21 A"/>
    <property type="chains" value="A/B/C/D/E=1-479"/>
</dbReference>
<dbReference type="PDB" id="8RHG">
    <property type="method" value="EM"/>
    <property type="resolution" value="3.01 A"/>
    <property type="chains" value="A/B/C/D/E=1-479"/>
</dbReference>
<dbReference type="PDBsum" id="8OP9"/>
<dbReference type="PDBsum" id="8OQ6"/>
<dbReference type="PDBsum" id="8OQ7"/>
<dbReference type="PDBsum" id="8OQ8"/>
<dbReference type="PDBsum" id="8OQA"/>
<dbReference type="PDBsum" id="8RH4"/>
<dbReference type="PDBsum" id="8RH7"/>
<dbReference type="PDBsum" id="8RH8"/>
<dbReference type="PDBsum" id="8RH9"/>
<dbReference type="PDBsum" id="8RHG"/>
<dbReference type="EMDB" id="EMD-17045"/>
<dbReference type="EMDB" id="EMD-17106"/>
<dbReference type="EMDB" id="EMD-17107"/>
<dbReference type="EMDB" id="EMD-17108"/>
<dbReference type="EMDB" id="EMD-17110"/>
<dbReference type="EMDB" id="EMD-19167"/>
<dbReference type="EMDB" id="EMD-19171"/>
<dbReference type="EMDB" id="EMD-19172"/>
<dbReference type="EMDB" id="EMD-19173"/>
<dbReference type="EMDB" id="EMD-19175"/>
<dbReference type="SMR" id="P24046"/>
<dbReference type="BioGRID" id="108843">
    <property type="interactions" value="12"/>
</dbReference>
<dbReference type="FunCoup" id="P24046">
    <property type="interactions" value="553"/>
</dbReference>
<dbReference type="IntAct" id="P24046">
    <property type="interactions" value="1"/>
</dbReference>
<dbReference type="STRING" id="9606.ENSP00000412673"/>
<dbReference type="BindingDB" id="P24046"/>
<dbReference type="ChEMBL" id="CHEMBL3561"/>
<dbReference type="DrugBank" id="DB01567">
    <property type="generic name" value="Fludiazepam"/>
</dbReference>
<dbReference type="DrugBank" id="DB00431">
    <property type="generic name" value="Lindane"/>
</dbReference>
<dbReference type="DrugBank" id="DB00466">
    <property type="generic name" value="Picrotoxin"/>
</dbReference>
<dbReference type="DrugBank" id="DB16754">
    <property type="generic name" value="TPMPA"/>
</dbReference>
<dbReference type="DrugCentral" id="P24046"/>
<dbReference type="TCDB" id="1.A.9.5.5">
    <property type="family name" value="the neurotransmitter receptor, cys loop, ligand-gated ion channel (lic) family"/>
</dbReference>
<dbReference type="GlyCosmos" id="P24046">
    <property type="glycosylation" value="3 sites, No reported glycans"/>
</dbReference>
<dbReference type="GlyGen" id="P24046">
    <property type="glycosylation" value="3 sites"/>
</dbReference>
<dbReference type="iPTMnet" id="P24046"/>
<dbReference type="PhosphoSitePlus" id="P24046"/>
<dbReference type="BioMuta" id="GABRR1"/>
<dbReference type="DMDM" id="223590210"/>
<dbReference type="MassIVE" id="P24046"/>
<dbReference type="PaxDb" id="9606-ENSP00000412673"/>
<dbReference type="PeptideAtlas" id="P24046"/>
<dbReference type="ProteomicsDB" id="54179">
    <molecule id="P24046-1"/>
</dbReference>
<dbReference type="ProteomicsDB" id="54180">
    <molecule id="P24046-2"/>
</dbReference>
<dbReference type="ProteomicsDB" id="7154"/>
<dbReference type="ABCD" id="P24046">
    <property type="antibodies" value="4 sequenced antibodies"/>
</dbReference>
<dbReference type="Antibodypedia" id="31856">
    <property type="antibodies" value="225 antibodies from 24 providers"/>
</dbReference>
<dbReference type="DNASU" id="2569"/>
<dbReference type="Ensembl" id="ENST00000369451.7">
    <molecule id="P24046-3"/>
    <property type="protein sequence ID" value="ENSP00000358463.3"/>
    <property type="gene ID" value="ENSG00000146276.13"/>
</dbReference>
<dbReference type="Ensembl" id="ENST00000435811.5">
    <molecule id="P24046-2"/>
    <property type="protein sequence ID" value="ENSP00000394687.1"/>
    <property type="gene ID" value="ENSG00000146276.13"/>
</dbReference>
<dbReference type="Ensembl" id="ENST00000454853.7">
    <molecule id="P24046-1"/>
    <property type="protein sequence ID" value="ENSP00000412673.2"/>
    <property type="gene ID" value="ENSG00000146276.13"/>
</dbReference>
<dbReference type="GeneID" id="2569"/>
<dbReference type="KEGG" id="hsa:2569"/>
<dbReference type="MANE-Select" id="ENST00000454853.7">
    <property type="protein sequence ID" value="ENSP00000412673.2"/>
    <property type="RefSeq nucleotide sequence ID" value="NM_002042.5"/>
    <property type="RefSeq protein sequence ID" value="NP_002033.2"/>
</dbReference>
<dbReference type="UCSC" id="uc003pna.3">
    <molecule id="P24046-1"/>
    <property type="organism name" value="human"/>
</dbReference>
<dbReference type="AGR" id="HGNC:4090"/>
<dbReference type="CTD" id="2569"/>
<dbReference type="DisGeNET" id="2569"/>
<dbReference type="GeneCards" id="GABRR1"/>
<dbReference type="HGNC" id="HGNC:4090">
    <property type="gene designation" value="GABRR1"/>
</dbReference>
<dbReference type="HPA" id="ENSG00000146276">
    <property type="expression patterns" value="Tissue enriched (retina)"/>
</dbReference>
<dbReference type="MalaCards" id="GABRR1"/>
<dbReference type="MIM" id="137161">
    <property type="type" value="gene"/>
</dbReference>
<dbReference type="neXtProt" id="NX_P24046"/>
<dbReference type="OpenTargets" id="ENSG00000146276"/>
<dbReference type="PharmGKB" id="PA28505"/>
<dbReference type="VEuPathDB" id="HostDB:ENSG00000146276"/>
<dbReference type="eggNOG" id="KOG3643">
    <property type="taxonomic scope" value="Eukaryota"/>
</dbReference>
<dbReference type="GeneTree" id="ENSGT00940000158591"/>
<dbReference type="HOGENOM" id="CLU_010920_0_1_1"/>
<dbReference type="InParanoid" id="P24046"/>
<dbReference type="OMA" id="WGWVWAT"/>
<dbReference type="OrthoDB" id="442503at2759"/>
<dbReference type="PAN-GO" id="P24046">
    <property type="GO annotations" value="13 GO annotations based on evolutionary models"/>
</dbReference>
<dbReference type="PhylomeDB" id="P24046"/>
<dbReference type="TreeFam" id="TF315453"/>
<dbReference type="PathwayCommons" id="P24046"/>
<dbReference type="Reactome" id="R-HSA-977443">
    <property type="pathway name" value="GABA receptor activation"/>
</dbReference>
<dbReference type="SignaLink" id="P24046"/>
<dbReference type="SIGNOR" id="P24046"/>
<dbReference type="BioGRID-ORCS" id="2569">
    <property type="hits" value="15 hits in 1160 CRISPR screens"/>
</dbReference>
<dbReference type="ChiTaRS" id="GABRR1">
    <property type="organism name" value="human"/>
</dbReference>
<dbReference type="GeneWiki" id="GABRR1"/>
<dbReference type="GenomeRNAi" id="2569"/>
<dbReference type="Pharos" id="P24046">
    <property type="development level" value="Tchem"/>
</dbReference>
<dbReference type="PRO" id="PR:P24046"/>
<dbReference type="Proteomes" id="UP000005640">
    <property type="component" value="Chromosome 6"/>
</dbReference>
<dbReference type="RNAct" id="P24046">
    <property type="molecule type" value="protein"/>
</dbReference>
<dbReference type="Bgee" id="ENSG00000146276">
    <property type="expression patterns" value="Expressed in male germ line stem cell (sensu Vertebrata) in testis and 50 other cell types or tissues"/>
</dbReference>
<dbReference type="ExpressionAtlas" id="P24046">
    <property type="expression patterns" value="baseline and differential"/>
</dbReference>
<dbReference type="GO" id="GO:0034707">
    <property type="term" value="C:chloride channel complex"/>
    <property type="evidence" value="ECO:0007669"/>
    <property type="project" value="UniProtKB-KW"/>
</dbReference>
<dbReference type="GO" id="GO:1902711">
    <property type="term" value="C:GABA-A receptor complex"/>
    <property type="evidence" value="ECO:0000318"/>
    <property type="project" value="GO_Central"/>
</dbReference>
<dbReference type="GO" id="GO:0098982">
    <property type="term" value="C:GABA-ergic synapse"/>
    <property type="evidence" value="ECO:0007669"/>
    <property type="project" value="Ensembl"/>
</dbReference>
<dbReference type="GO" id="GO:0098978">
    <property type="term" value="C:glutamatergic synapse"/>
    <property type="evidence" value="ECO:0007669"/>
    <property type="project" value="Ensembl"/>
</dbReference>
<dbReference type="GO" id="GO:0097708">
    <property type="term" value="C:intracellular vesicle"/>
    <property type="evidence" value="ECO:0007669"/>
    <property type="project" value="Ensembl"/>
</dbReference>
<dbReference type="GO" id="GO:0005886">
    <property type="term" value="C:plasma membrane"/>
    <property type="evidence" value="ECO:0000250"/>
    <property type="project" value="UniProtKB"/>
</dbReference>
<dbReference type="GO" id="GO:0045211">
    <property type="term" value="C:postsynaptic membrane"/>
    <property type="evidence" value="ECO:0007669"/>
    <property type="project" value="UniProtKB-SubCell"/>
</dbReference>
<dbReference type="GO" id="GO:0042734">
    <property type="term" value="C:presynaptic membrane"/>
    <property type="evidence" value="ECO:0007669"/>
    <property type="project" value="Ensembl"/>
</dbReference>
<dbReference type="GO" id="GO:0004890">
    <property type="term" value="F:GABA-A receptor activity"/>
    <property type="evidence" value="ECO:0000250"/>
    <property type="project" value="UniProtKB"/>
</dbReference>
<dbReference type="GO" id="GO:0022851">
    <property type="term" value="F:GABA-gated chloride ion channel activity"/>
    <property type="evidence" value="ECO:0000250"/>
    <property type="project" value="UniProtKB"/>
</dbReference>
<dbReference type="GO" id="GO:0042802">
    <property type="term" value="F:identical protein binding"/>
    <property type="evidence" value="ECO:0007669"/>
    <property type="project" value="Ensembl"/>
</dbReference>
<dbReference type="GO" id="GO:0099507">
    <property type="term" value="F:ligand-gated monoatomic ion channel activity involved in regulation of presynaptic membrane potential"/>
    <property type="evidence" value="ECO:0007669"/>
    <property type="project" value="Ensembl"/>
</dbReference>
<dbReference type="GO" id="GO:0019904">
    <property type="term" value="F:protein domain specific binding"/>
    <property type="evidence" value="ECO:0007669"/>
    <property type="project" value="Ensembl"/>
</dbReference>
<dbReference type="GO" id="GO:0044877">
    <property type="term" value="F:protein-containing complex binding"/>
    <property type="evidence" value="ECO:0007669"/>
    <property type="project" value="Ensembl"/>
</dbReference>
<dbReference type="GO" id="GO:0007268">
    <property type="term" value="P:chemical synaptic transmission"/>
    <property type="evidence" value="ECO:0000304"/>
    <property type="project" value="ProtInc"/>
</dbReference>
<dbReference type="GO" id="GO:1902476">
    <property type="term" value="P:chloride transmembrane transport"/>
    <property type="evidence" value="ECO:0000318"/>
    <property type="project" value="GO_Central"/>
</dbReference>
<dbReference type="GO" id="GO:0007214">
    <property type="term" value="P:gamma-aminobutyric acid signaling pathway"/>
    <property type="evidence" value="ECO:0000304"/>
    <property type="project" value="ProtInc"/>
</dbReference>
<dbReference type="GO" id="GO:0050804">
    <property type="term" value="P:modulation of chemical synaptic transmission"/>
    <property type="evidence" value="ECO:0007669"/>
    <property type="project" value="Ensembl"/>
</dbReference>
<dbReference type="CDD" id="cd19005">
    <property type="entry name" value="LGIC_ECD_GABAAR_rho"/>
    <property type="match status" value="1"/>
</dbReference>
<dbReference type="CDD" id="cd19059">
    <property type="entry name" value="LGIC_TM_GABAAR_rho"/>
    <property type="match status" value="1"/>
</dbReference>
<dbReference type="FunFam" id="2.70.170.10:FF:000015">
    <property type="entry name" value="gamma-aminobutyric acid receptor subunit rho-1 isoform X1"/>
    <property type="match status" value="1"/>
</dbReference>
<dbReference type="FunFam" id="1.20.58.390:FF:000005">
    <property type="entry name" value="Putative gamma-aminobutyric acid receptor subunit rho-2-like"/>
    <property type="match status" value="1"/>
</dbReference>
<dbReference type="Gene3D" id="2.70.170.10">
    <property type="entry name" value="Neurotransmitter-gated ion-channel ligand-binding domain"/>
    <property type="match status" value="1"/>
</dbReference>
<dbReference type="Gene3D" id="1.20.58.390">
    <property type="entry name" value="Neurotransmitter-gated ion-channel transmembrane domain"/>
    <property type="match status" value="1"/>
</dbReference>
<dbReference type="InterPro" id="IPR006028">
    <property type="entry name" value="GABAA/Glycine_rcpt"/>
</dbReference>
<dbReference type="InterPro" id="IPR008058">
    <property type="entry name" value="GABAAa_rho1_rcpt"/>
</dbReference>
<dbReference type="InterPro" id="IPR008057">
    <property type="entry name" value="GABAAa_rho_rcpt"/>
</dbReference>
<dbReference type="InterPro" id="IPR006202">
    <property type="entry name" value="Neur_chan_lig-bd"/>
</dbReference>
<dbReference type="InterPro" id="IPR036734">
    <property type="entry name" value="Neur_chan_lig-bd_sf"/>
</dbReference>
<dbReference type="InterPro" id="IPR006201">
    <property type="entry name" value="Neur_channel"/>
</dbReference>
<dbReference type="InterPro" id="IPR036719">
    <property type="entry name" value="Neuro-gated_channel_TM_sf"/>
</dbReference>
<dbReference type="InterPro" id="IPR038050">
    <property type="entry name" value="Neuro_actylchol_rec"/>
</dbReference>
<dbReference type="InterPro" id="IPR006029">
    <property type="entry name" value="Neurotrans-gated_channel_TM"/>
</dbReference>
<dbReference type="InterPro" id="IPR018000">
    <property type="entry name" value="Neurotransmitter_ion_chnl_CS"/>
</dbReference>
<dbReference type="NCBIfam" id="TIGR00860">
    <property type="entry name" value="LIC"/>
    <property type="match status" value="1"/>
</dbReference>
<dbReference type="PANTHER" id="PTHR18945">
    <property type="entry name" value="NEUROTRANSMITTER GATED ION CHANNEL"/>
    <property type="match status" value="1"/>
</dbReference>
<dbReference type="Pfam" id="PF02931">
    <property type="entry name" value="Neur_chan_LBD"/>
    <property type="match status" value="1"/>
</dbReference>
<dbReference type="Pfam" id="PF02932">
    <property type="entry name" value="Neur_chan_memb"/>
    <property type="match status" value="1"/>
</dbReference>
<dbReference type="PRINTS" id="PR00253">
    <property type="entry name" value="GABAARECEPTR"/>
</dbReference>
<dbReference type="PRINTS" id="PR01670">
    <property type="entry name" value="GABAARRHO"/>
</dbReference>
<dbReference type="PRINTS" id="PR01671">
    <property type="entry name" value="GABAARRHO1"/>
</dbReference>
<dbReference type="PRINTS" id="PR00252">
    <property type="entry name" value="NRIONCHANNEL"/>
</dbReference>
<dbReference type="SUPFAM" id="SSF90112">
    <property type="entry name" value="Neurotransmitter-gated ion-channel transmembrane pore"/>
    <property type="match status" value="1"/>
</dbReference>
<dbReference type="SUPFAM" id="SSF63712">
    <property type="entry name" value="Nicotinic receptor ligand binding domain-like"/>
    <property type="match status" value="1"/>
</dbReference>
<dbReference type="PROSITE" id="PS00236">
    <property type="entry name" value="NEUROTR_ION_CHANNEL"/>
    <property type="match status" value="1"/>
</dbReference>
<organism>
    <name type="scientific">Homo sapiens</name>
    <name type="common">Human</name>
    <dbReference type="NCBI Taxonomy" id="9606"/>
    <lineage>
        <taxon>Eukaryota</taxon>
        <taxon>Metazoa</taxon>
        <taxon>Chordata</taxon>
        <taxon>Craniata</taxon>
        <taxon>Vertebrata</taxon>
        <taxon>Euteleostomi</taxon>
        <taxon>Mammalia</taxon>
        <taxon>Eutheria</taxon>
        <taxon>Euarchontoglires</taxon>
        <taxon>Primates</taxon>
        <taxon>Haplorrhini</taxon>
        <taxon>Catarrhini</taxon>
        <taxon>Hominidae</taxon>
        <taxon>Homo</taxon>
    </lineage>
</organism>
<name>GBRR1_HUMAN</name>